<gene>
    <name evidence="1" type="primary">aroB</name>
    <name type="ordered locus">HPG27_262</name>
</gene>
<reference key="1">
    <citation type="journal article" date="2009" name="J. Bacteriol.">
        <title>The complete genome sequence of Helicobacter pylori strain G27.</title>
        <authorList>
            <person name="Baltrus D.A."/>
            <person name="Amieva M.R."/>
            <person name="Covacci A."/>
            <person name="Lowe T.M."/>
            <person name="Merrell D.S."/>
            <person name="Ottemann K.M."/>
            <person name="Stein M."/>
            <person name="Salama N.R."/>
            <person name="Guillemin K."/>
        </authorList>
    </citation>
    <scope>NUCLEOTIDE SEQUENCE [LARGE SCALE GENOMIC DNA]</scope>
    <source>
        <strain>G27</strain>
    </source>
</reference>
<keyword id="KW-0028">Amino-acid biosynthesis</keyword>
<keyword id="KW-0057">Aromatic amino acid biosynthesis</keyword>
<keyword id="KW-0170">Cobalt</keyword>
<keyword id="KW-0963">Cytoplasm</keyword>
<keyword id="KW-0456">Lyase</keyword>
<keyword id="KW-0479">Metal-binding</keyword>
<keyword id="KW-0520">NAD</keyword>
<keyword id="KW-0547">Nucleotide-binding</keyword>
<keyword id="KW-1185">Reference proteome</keyword>
<keyword id="KW-0862">Zinc</keyword>
<accession>B5ZA49</accession>
<sequence length="343" mass="39060">MQEIVIPLKEKSYKVFLGELPEIKLKQKALIISDSIVSGLHLSYLLERLKALEVRVCVIESGEKYKNFHSLERILNNAFEMQLNRHSLMIALGGGVISDMVGFASSIYFRGIDFINIPTTLLAQVDASVGGKTGINTPYGKNLIGSFHQPKAVYIDLSFLKTLEKREFQAGVAEIIKMAVCFDKNLVERLETKDLKDCLEEVVFQSVNIKAQVVVQDEKERNIRAGLNYGHTFGHAIEKETDYERFLHGEAIAIGMCMANDLALSLGMLTLKEYERIENLLKKFDLIFHYKIIDLQKFYERLFLDKKSENKTIKFILPKGIGAFEATSHIPKETILKVLEKWH</sequence>
<evidence type="ECO:0000255" key="1">
    <source>
        <dbReference type="HAMAP-Rule" id="MF_00110"/>
    </source>
</evidence>
<comment type="function">
    <text evidence="1">Catalyzes the conversion of 3-deoxy-D-arabino-heptulosonate 7-phosphate (DAHP) to dehydroquinate (DHQ).</text>
</comment>
<comment type="catalytic activity">
    <reaction evidence="1">
        <text>7-phospho-2-dehydro-3-deoxy-D-arabino-heptonate = 3-dehydroquinate + phosphate</text>
        <dbReference type="Rhea" id="RHEA:21968"/>
        <dbReference type="ChEBI" id="CHEBI:32364"/>
        <dbReference type="ChEBI" id="CHEBI:43474"/>
        <dbReference type="ChEBI" id="CHEBI:58394"/>
        <dbReference type="EC" id="4.2.3.4"/>
    </reaction>
</comment>
<comment type="cofactor">
    <cofactor evidence="1">
        <name>Co(2+)</name>
        <dbReference type="ChEBI" id="CHEBI:48828"/>
    </cofactor>
    <cofactor evidence="1">
        <name>Zn(2+)</name>
        <dbReference type="ChEBI" id="CHEBI:29105"/>
    </cofactor>
    <text evidence="1">Binds 1 divalent metal cation per subunit. Can use either Co(2+) or Zn(2+).</text>
</comment>
<comment type="cofactor">
    <cofactor evidence="1">
        <name>NAD(+)</name>
        <dbReference type="ChEBI" id="CHEBI:57540"/>
    </cofactor>
</comment>
<comment type="pathway">
    <text evidence="1">Metabolic intermediate biosynthesis; chorismate biosynthesis; chorismate from D-erythrose 4-phosphate and phosphoenolpyruvate: step 2/7.</text>
</comment>
<comment type="subcellular location">
    <subcellularLocation>
        <location evidence="1">Cytoplasm</location>
    </subcellularLocation>
</comment>
<comment type="similarity">
    <text evidence="1">Belongs to the sugar phosphate cyclases superfamily. Dehydroquinate synthase family.</text>
</comment>
<organism>
    <name type="scientific">Helicobacter pylori (strain G27)</name>
    <dbReference type="NCBI Taxonomy" id="563041"/>
    <lineage>
        <taxon>Bacteria</taxon>
        <taxon>Pseudomonadati</taxon>
        <taxon>Campylobacterota</taxon>
        <taxon>Epsilonproteobacteria</taxon>
        <taxon>Campylobacterales</taxon>
        <taxon>Helicobacteraceae</taxon>
        <taxon>Helicobacter</taxon>
    </lineage>
</organism>
<dbReference type="EC" id="4.2.3.4" evidence="1"/>
<dbReference type="EMBL" id="CP001173">
    <property type="protein sequence ID" value="ACI27029.1"/>
    <property type="molecule type" value="Genomic_DNA"/>
</dbReference>
<dbReference type="RefSeq" id="WP_001156364.1">
    <property type="nucleotide sequence ID" value="NC_011333.1"/>
</dbReference>
<dbReference type="SMR" id="B5ZA49"/>
<dbReference type="KEGG" id="hpg:HPG27_262"/>
<dbReference type="HOGENOM" id="CLU_001201_0_2_7"/>
<dbReference type="UniPathway" id="UPA00053">
    <property type="reaction ID" value="UER00085"/>
</dbReference>
<dbReference type="Proteomes" id="UP000001735">
    <property type="component" value="Chromosome"/>
</dbReference>
<dbReference type="GO" id="GO:0005737">
    <property type="term" value="C:cytoplasm"/>
    <property type="evidence" value="ECO:0007669"/>
    <property type="project" value="UniProtKB-SubCell"/>
</dbReference>
<dbReference type="GO" id="GO:0003856">
    <property type="term" value="F:3-dehydroquinate synthase activity"/>
    <property type="evidence" value="ECO:0007669"/>
    <property type="project" value="UniProtKB-UniRule"/>
</dbReference>
<dbReference type="GO" id="GO:0046872">
    <property type="term" value="F:metal ion binding"/>
    <property type="evidence" value="ECO:0007669"/>
    <property type="project" value="UniProtKB-KW"/>
</dbReference>
<dbReference type="GO" id="GO:0000166">
    <property type="term" value="F:nucleotide binding"/>
    <property type="evidence" value="ECO:0007669"/>
    <property type="project" value="UniProtKB-KW"/>
</dbReference>
<dbReference type="GO" id="GO:0008652">
    <property type="term" value="P:amino acid biosynthetic process"/>
    <property type="evidence" value="ECO:0007669"/>
    <property type="project" value="UniProtKB-KW"/>
</dbReference>
<dbReference type="GO" id="GO:0009073">
    <property type="term" value="P:aromatic amino acid family biosynthetic process"/>
    <property type="evidence" value="ECO:0007669"/>
    <property type="project" value="UniProtKB-KW"/>
</dbReference>
<dbReference type="GO" id="GO:0009423">
    <property type="term" value="P:chorismate biosynthetic process"/>
    <property type="evidence" value="ECO:0007669"/>
    <property type="project" value="UniProtKB-UniRule"/>
</dbReference>
<dbReference type="CDD" id="cd08195">
    <property type="entry name" value="DHQS"/>
    <property type="match status" value="1"/>
</dbReference>
<dbReference type="FunFam" id="1.20.1090.10:FF:000025">
    <property type="entry name" value="3-dehydroquinate synthase"/>
    <property type="match status" value="1"/>
</dbReference>
<dbReference type="FunFam" id="3.40.50.1970:FF:000030">
    <property type="entry name" value="3-dehydroquinate synthase"/>
    <property type="match status" value="1"/>
</dbReference>
<dbReference type="Gene3D" id="3.40.50.1970">
    <property type="match status" value="1"/>
</dbReference>
<dbReference type="Gene3D" id="1.20.1090.10">
    <property type="entry name" value="Dehydroquinate synthase-like - alpha domain"/>
    <property type="match status" value="1"/>
</dbReference>
<dbReference type="HAMAP" id="MF_00110">
    <property type="entry name" value="DHQ_synthase"/>
    <property type="match status" value="1"/>
</dbReference>
<dbReference type="InterPro" id="IPR050071">
    <property type="entry name" value="Dehydroquinate_synthase"/>
</dbReference>
<dbReference type="InterPro" id="IPR016037">
    <property type="entry name" value="DHQ_synth_AroB"/>
</dbReference>
<dbReference type="InterPro" id="IPR030963">
    <property type="entry name" value="DHQ_synth_fam"/>
</dbReference>
<dbReference type="InterPro" id="IPR030960">
    <property type="entry name" value="DHQS/DOIS_N"/>
</dbReference>
<dbReference type="InterPro" id="IPR056179">
    <property type="entry name" value="DHQS_C"/>
</dbReference>
<dbReference type="NCBIfam" id="TIGR01357">
    <property type="entry name" value="aroB"/>
    <property type="match status" value="1"/>
</dbReference>
<dbReference type="PANTHER" id="PTHR43622">
    <property type="entry name" value="3-DEHYDROQUINATE SYNTHASE"/>
    <property type="match status" value="1"/>
</dbReference>
<dbReference type="PANTHER" id="PTHR43622:SF7">
    <property type="entry name" value="3-DEHYDROQUINATE SYNTHASE, CHLOROPLASTIC"/>
    <property type="match status" value="1"/>
</dbReference>
<dbReference type="Pfam" id="PF01761">
    <property type="entry name" value="DHQ_synthase"/>
    <property type="match status" value="1"/>
</dbReference>
<dbReference type="Pfam" id="PF24621">
    <property type="entry name" value="DHQS_C"/>
    <property type="match status" value="1"/>
</dbReference>
<dbReference type="PIRSF" id="PIRSF001455">
    <property type="entry name" value="DHQ_synth"/>
    <property type="match status" value="1"/>
</dbReference>
<dbReference type="SUPFAM" id="SSF56796">
    <property type="entry name" value="Dehydroquinate synthase-like"/>
    <property type="match status" value="1"/>
</dbReference>
<feature type="chain" id="PRO_1000094532" description="3-dehydroquinate synthase">
    <location>
        <begin position="1"/>
        <end position="343"/>
    </location>
</feature>
<feature type="binding site" evidence="1">
    <location>
        <begin position="61"/>
        <end position="66"/>
    </location>
    <ligand>
        <name>NAD(+)</name>
        <dbReference type="ChEBI" id="CHEBI:57540"/>
    </ligand>
</feature>
<feature type="binding site" evidence="1">
    <location>
        <begin position="95"/>
        <end position="99"/>
    </location>
    <ligand>
        <name>NAD(+)</name>
        <dbReference type="ChEBI" id="CHEBI:57540"/>
    </ligand>
</feature>
<feature type="binding site" evidence="1">
    <location>
        <begin position="119"/>
        <end position="120"/>
    </location>
    <ligand>
        <name>NAD(+)</name>
        <dbReference type="ChEBI" id="CHEBI:57540"/>
    </ligand>
</feature>
<feature type="binding site" evidence="1">
    <location>
        <position position="132"/>
    </location>
    <ligand>
        <name>NAD(+)</name>
        <dbReference type="ChEBI" id="CHEBI:57540"/>
    </ligand>
</feature>
<feature type="binding site" evidence="1">
    <location>
        <position position="141"/>
    </location>
    <ligand>
        <name>NAD(+)</name>
        <dbReference type="ChEBI" id="CHEBI:57540"/>
    </ligand>
</feature>
<feature type="binding site" evidence="1">
    <location>
        <begin position="159"/>
        <end position="162"/>
    </location>
    <ligand>
        <name>NAD(+)</name>
        <dbReference type="ChEBI" id="CHEBI:57540"/>
    </ligand>
</feature>
<feature type="binding site" evidence="1">
    <location>
        <position position="174"/>
    </location>
    <ligand>
        <name>Zn(2+)</name>
        <dbReference type="ChEBI" id="CHEBI:29105"/>
    </ligand>
</feature>
<feature type="binding site" evidence="1">
    <location>
        <position position="231"/>
    </location>
    <ligand>
        <name>Zn(2+)</name>
        <dbReference type="ChEBI" id="CHEBI:29105"/>
    </ligand>
</feature>
<feature type="binding site" evidence="1">
    <location>
        <position position="248"/>
    </location>
    <ligand>
        <name>Zn(2+)</name>
        <dbReference type="ChEBI" id="CHEBI:29105"/>
    </ligand>
</feature>
<proteinExistence type="inferred from homology"/>
<name>AROB_HELPG</name>
<protein>
    <recommendedName>
        <fullName evidence="1">3-dehydroquinate synthase</fullName>
        <shortName evidence="1">DHQS</shortName>
        <ecNumber evidence="1">4.2.3.4</ecNumber>
    </recommendedName>
</protein>